<dbReference type="EMBL" id="AE017197">
    <property type="protein sequence ID" value="AAU04102.1"/>
    <property type="molecule type" value="Genomic_DNA"/>
</dbReference>
<dbReference type="RefSeq" id="WP_011191081.1">
    <property type="nucleotide sequence ID" value="NC_006142.1"/>
</dbReference>
<dbReference type="SMR" id="Q68W90"/>
<dbReference type="KEGG" id="rty:RT0639"/>
<dbReference type="eggNOG" id="COG0094">
    <property type="taxonomic scope" value="Bacteria"/>
</dbReference>
<dbReference type="HOGENOM" id="CLU_061015_2_1_5"/>
<dbReference type="OrthoDB" id="9806626at2"/>
<dbReference type="Proteomes" id="UP000000604">
    <property type="component" value="Chromosome"/>
</dbReference>
<dbReference type="GO" id="GO:1990904">
    <property type="term" value="C:ribonucleoprotein complex"/>
    <property type="evidence" value="ECO:0007669"/>
    <property type="project" value="UniProtKB-KW"/>
</dbReference>
<dbReference type="GO" id="GO:0005840">
    <property type="term" value="C:ribosome"/>
    <property type="evidence" value="ECO:0007669"/>
    <property type="project" value="UniProtKB-KW"/>
</dbReference>
<dbReference type="GO" id="GO:0019843">
    <property type="term" value="F:rRNA binding"/>
    <property type="evidence" value="ECO:0007669"/>
    <property type="project" value="UniProtKB-UniRule"/>
</dbReference>
<dbReference type="GO" id="GO:0003735">
    <property type="term" value="F:structural constituent of ribosome"/>
    <property type="evidence" value="ECO:0007669"/>
    <property type="project" value="InterPro"/>
</dbReference>
<dbReference type="GO" id="GO:0000049">
    <property type="term" value="F:tRNA binding"/>
    <property type="evidence" value="ECO:0007669"/>
    <property type="project" value="UniProtKB-UniRule"/>
</dbReference>
<dbReference type="GO" id="GO:0006412">
    <property type="term" value="P:translation"/>
    <property type="evidence" value="ECO:0007669"/>
    <property type="project" value="UniProtKB-UniRule"/>
</dbReference>
<dbReference type="FunFam" id="3.30.1440.10:FF:000001">
    <property type="entry name" value="50S ribosomal protein L5"/>
    <property type="match status" value="1"/>
</dbReference>
<dbReference type="Gene3D" id="3.30.1440.10">
    <property type="match status" value="1"/>
</dbReference>
<dbReference type="HAMAP" id="MF_01333_B">
    <property type="entry name" value="Ribosomal_uL5_B"/>
    <property type="match status" value="1"/>
</dbReference>
<dbReference type="InterPro" id="IPR002132">
    <property type="entry name" value="Ribosomal_uL5"/>
</dbReference>
<dbReference type="InterPro" id="IPR020930">
    <property type="entry name" value="Ribosomal_uL5_bac-type"/>
</dbReference>
<dbReference type="InterPro" id="IPR031309">
    <property type="entry name" value="Ribosomal_uL5_C"/>
</dbReference>
<dbReference type="InterPro" id="IPR020929">
    <property type="entry name" value="Ribosomal_uL5_CS"/>
</dbReference>
<dbReference type="InterPro" id="IPR022803">
    <property type="entry name" value="Ribosomal_uL5_dom_sf"/>
</dbReference>
<dbReference type="InterPro" id="IPR031310">
    <property type="entry name" value="Ribosomal_uL5_N"/>
</dbReference>
<dbReference type="NCBIfam" id="NF000585">
    <property type="entry name" value="PRK00010.1"/>
    <property type="match status" value="1"/>
</dbReference>
<dbReference type="PANTHER" id="PTHR11994">
    <property type="entry name" value="60S RIBOSOMAL PROTEIN L11-RELATED"/>
    <property type="match status" value="1"/>
</dbReference>
<dbReference type="Pfam" id="PF00281">
    <property type="entry name" value="Ribosomal_L5"/>
    <property type="match status" value="1"/>
</dbReference>
<dbReference type="Pfam" id="PF00673">
    <property type="entry name" value="Ribosomal_L5_C"/>
    <property type="match status" value="1"/>
</dbReference>
<dbReference type="PIRSF" id="PIRSF002161">
    <property type="entry name" value="Ribosomal_L5"/>
    <property type="match status" value="1"/>
</dbReference>
<dbReference type="SUPFAM" id="SSF55282">
    <property type="entry name" value="RL5-like"/>
    <property type="match status" value="1"/>
</dbReference>
<dbReference type="PROSITE" id="PS00358">
    <property type="entry name" value="RIBOSOMAL_L5"/>
    <property type="match status" value="1"/>
</dbReference>
<evidence type="ECO:0000255" key="1">
    <source>
        <dbReference type="HAMAP-Rule" id="MF_01333"/>
    </source>
</evidence>
<evidence type="ECO:0000305" key="2"/>
<gene>
    <name evidence="1" type="primary">rplE</name>
    <name type="ordered locus">RT0639</name>
</gene>
<proteinExistence type="inferred from homology"/>
<organism>
    <name type="scientific">Rickettsia typhi (strain ATCC VR-144 / Wilmington)</name>
    <dbReference type="NCBI Taxonomy" id="257363"/>
    <lineage>
        <taxon>Bacteria</taxon>
        <taxon>Pseudomonadati</taxon>
        <taxon>Pseudomonadota</taxon>
        <taxon>Alphaproteobacteria</taxon>
        <taxon>Rickettsiales</taxon>
        <taxon>Rickettsiaceae</taxon>
        <taxon>Rickettsieae</taxon>
        <taxon>Rickettsia</taxon>
        <taxon>typhus group</taxon>
    </lineage>
</organism>
<comment type="function">
    <text evidence="1">This is one of the proteins that bind and probably mediate the attachment of the 5S RNA into the large ribosomal subunit, where it forms part of the central protuberance. In the 70S ribosome it contacts protein S13 of the 30S subunit (bridge B1b), connecting the 2 subunits; this bridge is implicated in subunit movement. Contacts the P site tRNA; the 5S rRNA and some of its associated proteins might help stabilize positioning of ribosome-bound tRNAs.</text>
</comment>
<comment type="subunit">
    <text evidence="1">Part of the 50S ribosomal subunit; part of the 5S rRNA/L5/L18/L25 subcomplex. Contacts the 5S rRNA and the P site tRNA. Forms a bridge to the 30S subunit in the 70S ribosome.</text>
</comment>
<comment type="similarity">
    <text evidence="1">Belongs to the universal ribosomal protein uL5 family.</text>
</comment>
<feature type="chain" id="PRO_0000243057" description="Large ribosomal subunit protein uL5">
    <location>
        <begin position="1"/>
        <end position="179"/>
    </location>
</feature>
<accession>Q68W90</accession>
<protein>
    <recommendedName>
        <fullName evidence="1">Large ribosomal subunit protein uL5</fullName>
    </recommendedName>
    <alternativeName>
        <fullName evidence="2">50S ribosomal protein L5</fullName>
    </alternativeName>
</protein>
<sequence>MLRFKELYKKKIIESLKKEFSFKNQHEIPQIKKIVINMGVGEAIADSKVINNALNDLTLISGQKPIVTLARKSIATFKLRENMKIGCKVTLRKDRMYDFLERLVIVALPRVKEFRGFSYKSFDGKGNFTFGLKEQIVFPEINYDKIDTIRGMDITIVTSAKTDQESKFLLSGFNLPFYN</sequence>
<reference key="1">
    <citation type="journal article" date="2004" name="J. Bacteriol.">
        <title>Complete genome sequence of Rickettsia typhi and comparison with sequences of other Rickettsiae.</title>
        <authorList>
            <person name="McLeod M.P."/>
            <person name="Qin X."/>
            <person name="Karpathy S.E."/>
            <person name="Gioia J."/>
            <person name="Highlander S.K."/>
            <person name="Fox G.E."/>
            <person name="McNeill T.Z."/>
            <person name="Jiang H."/>
            <person name="Muzny D."/>
            <person name="Jacob L.S."/>
            <person name="Hawes A.C."/>
            <person name="Sodergren E."/>
            <person name="Gill R."/>
            <person name="Hume J."/>
            <person name="Morgan M."/>
            <person name="Fan G."/>
            <person name="Amin A.G."/>
            <person name="Gibbs R.A."/>
            <person name="Hong C."/>
            <person name="Yu X.-J."/>
            <person name="Walker D.H."/>
            <person name="Weinstock G.M."/>
        </authorList>
    </citation>
    <scope>NUCLEOTIDE SEQUENCE [LARGE SCALE GENOMIC DNA]</scope>
    <source>
        <strain>ATCC VR-144 / Wilmington</strain>
    </source>
</reference>
<keyword id="KW-0687">Ribonucleoprotein</keyword>
<keyword id="KW-0689">Ribosomal protein</keyword>
<keyword id="KW-0694">RNA-binding</keyword>
<keyword id="KW-0699">rRNA-binding</keyword>
<keyword id="KW-0820">tRNA-binding</keyword>
<name>RL5_RICTY</name>